<gene>
    <name evidence="1" type="primary">rplS</name>
    <name type="ordered locus">SPCG_1260</name>
</gene>
<name>RL19_STRPS</name>
<evidence type="ECO:0000255" key="1">
    <source>
        <dbReference type="HAMAP-Rule" id="MF_00402"/>
    </source>
</evidence>
<evidence type="ECO:0000305" key="2"/>
<keyword id="KW-0687">Ribonucleoprotein</keyword>
<keyword id="KW-0689">Ribosomal protein</keyword>
<comment type="function">
    <text evidence="1">This protein is located at the 30S-50S ribosomal subunit interface and may play a role in the structure and function of the aminoacyl-tRNA binding site.</text>
</comment>
<comment type="similarity">
    <text evidence="1">Belongs to the bacterial ribosomal protein bL19 family.</text>
</comment>
<feature type="chain" id="PRO_1000193895" description="Large ribosomal subunit protein bL19">
    <location>
        <begin position="1"/>
        <end position="115"/>
    </location>
</feature>
<organism>
    <name type="scientific">Streptococcus pneumoniae (strain CGSP14)</name>
    <dbReference type="NCBI Taxonomy" id="516950"/>
    <lineage>
        <taxon>Bacteria</taxon>
        <taxon>Bacillati</taxon>
        <taxon>Bacillota</taxon>
        <taxon>Bacilli</taxon>
        <taxon>Lactobacillales</taxon>
        <taxon>Streptococcaceae</taxon>
        <taxon>Streptococcus</taxon>
    </lineage>
</organism>
<sequence>MNPLIQSLTEGQLRTDIPSFRPGDTVRVHAKVVEGNRERIQIFEGVVIARKGAGISENYTVRKISNGVGVERIFPIHTPRVEKIEVVRYGKVRRAKLYYLRALQGKAARIKEIRR</sequence>
<reference key="1">
    <citation type="journal article" date="2009" name="BMC Genomics">
        <title>Genome evolution driven by host adaptations results in a more virulent and antimicrobial-resistant Streptococcus pneumoniae serotype 14.</title>
        <authorList>
            <person name="Ding F."/>
            <person name="Tang P."/>
            <person name="Hsu M.-H."/>
            <person name="Cui P."/>
            <person name="Hu S."/>
            <person name="Yu J."/>
            <person name="Chiu C.-H."/>
        </authorList>
    </citation>
    <scope>NUCLEOTIDE SEQUENCE [LARGE SCALE GENOMIC DNA]</scope>
    <source>
        <strain>CGSP14</strain>
    </source>
</reference>
<proteinExistence type="inferred from homology"/>
<dbReference type="EMBL" id="CP001033">
    <property type="protein sequence ID" value="ACB90512.1"/>
    <property type="molecule type" value="Genomic_DNA"/>
</dbReference>
<dbReference type="RefSeq" id="WP_001068669.1">
    <property type="nucleotide sequence ID" value="NC_010582.1"/>
</dbReference>
<dbReference type="SMR" id="B2IQ88"/>
<dbReference type="GeneID" id="93739485"/>
<dbReference type="KEGG" id="spw:SPCG_1260"/>
<dbReference type="HOGENOM" id="CLU_103507_2_1_9"/>
<dbReference type="GO" id="GO:0022625">
    <property type="term" value="C:cytosolic large ribosomal subunit"/>
    <property type="evidence" value="ECO:0007669"/>
    <property type="project" value="TreeGrafter"/>
</dbReference>
<dbReference type="GO" id="GO:0003735">
    <property type="term" value="F:structural constituent of ribosome"/>
    <property type="evidence" value="ECO:0007669"/>
    <property type="project" value="InterPro"/>
</dbReference>
<dbReference type="GO" id="GO:0006412">
    <property type="term" value="P:translation"/>
    <property type="evidence" value="ECO:0007669"/>
    <property type="project" value="UniProtKB-UniRule"/>
</dbReference>
<dbReference type="FunFam" id="2.30.30.790:FF:000001">
    <property type="entry name" value="50S ribosomal protein L19"/>
    <property type="match status" value="1"/>
</dbReference>
<dbReference type="Gene3D" id="2.30.30.790">
    <property type="match status" value="1"/>
</dbReference>
<dbReference type="HAMAP" id="MF_00402">
    <property type="entry name" value="Ribosomal_bL19"/>
    <property type="match status" value="1"/>
</dbReference>
<dbReference type="InterPro" id="IPR001857">
    <property type="entry name" value="Ribosomal_bL19"/>
</dbReference>
<dbReference type="InterPro" id="IPR018257">
    <property type="entry name" value="Ribosomal_bL19_CS"/>
</dbReference>
<dbReference type="InterPro" id="IPR038657">
    <property type="entry name" value="Ribosomal_bL19_sf"/>
</dbReference>
<dbReference type="InterPro" id="IPR008991">
    <property type="entry name" value="Translation_prot_SH3-like_sf"/>
</dbReference>
<dbReference type="NCBIfam" id="TIGR01024">
    <property type="entry name" value="rplS_bact"/>
    <property type="match status" value="1"/>
</dbReference>
<dbReference type="PANTHER" id="PTHR15680:SF9">
    <property type="entry name" value="LARGE RIBOSOMAL SUBUNIT PROTEIN BL19M"/>
    <property type="match status" value="1"/>
</dbReference>
<dbReference type="PANTHER" id="PTHR15680">
    <property type="entry name" value="RIBOSOMAL PROTEIN L19"/>
    <property type="match status" value="1"/>
</dbReference>
<dbReference type="Pfam" id="PF01245">
    <property type="entry name" value="Ribosomal_L19"/>
    <property type="match status" value="1"/>
</dbReference>
<dbReference type="PIRSF" id="PIRSF002191">
    <property type="entry name" value="Ribosomal_L19"/>
    <property type="match status" value="1"/>
</dbReference>
<dbReference type="PRINTS" id="PR00061">
    <property type="entry name" value="RIBOSOMALL19"/>
</dbReference>
<dbReference type="SUPFAM" id="SSF50104">
    <property type="entry name" value="Translation proteins SH3-like domain"/>
    <property type="match status" value="1"/>
</dbReference>
<dbReference type="PROSITE" id="PS01015">
    <property type="entry name" value="RIBOSOMAL_L19"/>
    <property type="match status" value="1"/>
</dbReference>
<accession>B2IQ88</accession>
<protein>
    <recommendedName>
        <fullName evidence="1">Large ribosomal subunit protein bL19</fullName>
    </recommendedName>
    <alternativeName>
        <fullName evidence="2">50S ribosomal protein L19</fullName>
    </alternativeName>
</protein>